<reference key="1">
    <citation type="journal article" date="2013" name="Proc. Natl. Acad. Sci. U.S.A.">
        <title>Polynucleobacter necessarius, a model for genome reduction in both free-living and symbiotic bacteria.</title>
        <authorList>
            <person name="Boscaro V."/>
            <person name="Felletti M."/>
            <person name="Vannini C."/>
            <person name="Ackerman M.S."/>
            <person name="Chain P.S."/>
            <person name="Malfatti S."/>
            <person name="Vergez L.M."/>
            <person name="Shin M."/>
            <person name="Doak T.G."/>
            <person name="Lynch M."/>
            <person name="Petroni G."/>
        </authorList>
    </citation>
    <scope>NUCLEOTIDE SEQUENCE [LARGE SCALE GENOMIC DNA]</scope>
    <source>
        <strain>STIR1</strain>
    </source>
</reference>
<accession>B1XVN0</accession>
<sequence length="131" mass="14545">MNLIEKIEQEEVARLSANKVLPSFAPGDTVVVSVNVVEGTRKRTQAFEGVVIAKRNRGLNSSFIVRKISSGEGVERTFQTYSPLIASVEVKRRGDVRRAKLYYLRDRSGKSARIKEKLQARVKPTAAVAAE</sequence>
<keyword id="KW-0687">Ribonucleoprotein</keyword>
<keyword id="KW-0689">Ribosomal protein</keyword>
<evidence type="ECO:0000255" key="1">
    <source>
        <dbReference type="HAMAP-Rule" id="MF_00402"/>
    </source>
</evidence>
<evidence type="ECO:0000305" key="2"/>
<organism>
    <name type="scientific">Polynucleobacter necessarius subsp. necessarius (strain STIR1)</name>
    <dbReference type="NCBI Taxonomy" id="452638"/>
    <lineage>
        <taxon>Bacteria</taxon>
        <taxon>Pseudomonadati</taxon>
        <taxon>Pseudomonadota</taxon>
        <taxon>Betaproteobacteria</taxon>
        <taxon>Burkholderiales</taxon>
        <taxon>Burkholderiaceae</taxon>
        <taxon>Polynucleobacter</taxon>
    </lineage>
</organism>
<feature type="chain" id="PRO_1000123353" description="Large ribosomal subunit protein bL19">
    <location>
        <begin position="1"/>
        <end position="131"/>
    </location>
</feature>
<comment type="function">
    <text evidence="1">This protein is located at the 30S-50S ribosomal subunit interface and may play a role in the structure and function of the aminoacyl-tRNA binding site.</text>
</comment>
<comment type="similarity">
    <text evidence="1">Belongs to the bacterial ribosomal protein bL19 family.</text>
</comment>
<dbReference type="EMBL" id="CP001010">
    <property type="protein sequence ID" value="ACB44407.1"/>
    <property type="molecule type" value="Genomic_DNA"/>
</dbReference>
<dbReference type="SMR" id="B1XVN0"/>
<dbReference type="STRING" id="452638.Pnec_1282"/>
<dbReference type="KEGG" id="pne:Pnec_1282"/>
<dbReference type="eggNOG" id="COG0335">
    <property type="taxonomic scope" value="Bacteria"/>
</dbReference>
<dbReference type="HOGENOM" id="CLU_103507_1_0_4"/>
<dbReference type="OrthoDB" id="9803541at2"/>
<dbReference type="GO" id="GO:0022625">
    <property type="term" value="C:cytosolic large ribosomal subunit"/>
    <property type="evidence" value="ECO:0007669"/>
    <property type="project" value="TreeGrafter"/>
</dbReference>
<dbReference type="GO" id="GO:0003735">
    <property type="term" value="F:structural constituent of ribosome"/>
    <property type="evidence" value="ECO:0007669"/>
    <property type="project" value="InterPro"/>
</dbReference>
<dbReference type="GO" id="GO:0006412">
    <property type="term" value="P:translation"/>
    <property type="evidence" value="ECO:0007669"/>
    <property type="project" value="UniProtKB-UniRule"/>
</dbReference>
<dbReference type="FunFam" id="2.30.30.790:FF:000001">
    <property type="entry name" value="50S ribosomal protein L19"/>
    <property type="match status" value="1"/>
</dbReference>
<dbReference type="Gene3D" id="2.30.30.790">
    <property type="match status" value="1"/>
</dbReference>
<dbReference type="HAMAP" id="MF_00402">
    <property type="entry name" value="Ribosomal_bL19"/>
    <property type="match status" value="1"/>
</dbReference>
<dbReference type="InterPro" id="IPR001857">
    <property type="entry name" value="Ribosomal_bL19"/>
</dbReference>
<dbReference type="InterPro" id="IPR018257">
    <property type="entry name" value="Ribosomal_bL19_CS"/>
</dbReference>
<dbReference type="InterPro" id="IPR038657">
    <property type="entry name" value="Ribosomal_bL19_sf"/>
</dbReference>
<dbReference type="InterPro" id="IPR008991">
    <property type="entry name" value="Translation_prot_SH3-like_sf"/>
</dbReference>
<dbReference type="NCBIfam" id="TIGR01024">
    <property type="entry name" value="rplS_bact"/>
    <property type="match status" value="1"/>
</dbReference>
<dbReference type="PANTHER" id="PTHR15680:SF9">
    <property type="entry name" value="LARGE RIBOSOMAL SUBUNIT PROTEIN BL19M"/>
    <property type="match status" value="1"/>
</dbReference>
<dbReference type="PANTHER" id="PTHR15680">
    <property type="entry name" value="RIBOSOMAL PROTEIN L19"/>
    <property type="match status" value="1"/>
</dbReference>
<dbReference type="Pfam" id="PF01245">
    <property type="entry name" value="Ribosomal_L19"/>
    <property type="match status" value="1"/>
</dbReference>
<dbReference type="PIRSF" id="PIRSF002191">
    <property type="entry name" value="Ribosomal_L19"/>
    <property type="match status" value="1"/>
</dbReference>
<dbReference type="PRINTS" id="PR00061">
    <property type="entry name" value="RIBOSOMALL19"/>
</dbReference>
<dbReference type="SUPFAM" id="SSF50104">
    <property type="entry name" value="Translation proteins SH3-like domain"/>
    <property type="match status" value="1"/>
</dbReference>
<dbReference type="PROSITE" id="PS01015">
    <property type="entry name" value="RIBOSOMAL_L19"/>
    <property type="match status" value="1"/>
</dbReference>
<name>RL19_POLNS</name>
<proteinExistence type="inferred from homology"/>
<protein>
    <recommendedName>
        <fullName evidence="1">Large ribosomal subunit protein bL19</fullName>
    </recommendedName>
    <alternativeName>
        <fullName evidence="2">50S ribosomal protein L19</fullName>
    </alternativeName>
</protein>
<gene>
    <name evidence="1" type="primary">rplS</name>
    <name type="ordered locus">Pnec_1282</name>
</gene>